<sequence>MTEQFWQQKKLEEMTEQEWESLCDGCGKCCLHKLMDEDTDEVYYTNVACSWLNSKTCACKDYPKRFTSGEECLKLSRENIAEFNWLPLTCAYRLLAEDKPLPEWHPLITGSKSAMHAAGESVRNKVVYAIDVKNWEDHITNHPHRS</sequence>
<protein>
    <recommendedName>
        <fullName evidence="1">UPF0260 protein VF_1660</fullName>
    </recommendedName>
</protein>
<reference key="1">
    <citation type="journal article" date="2005" name="Proc. Natl. Acad. Sci. U.S.A.">
        <title>Complete genome sequence of Vibrio fischeri: a symbiotic bacterium with pathogenic congeners.</title>
        <authorList>
            <person name="Ruby E.G."/>
            <person name="Urbanowski M."/>
            <person name="Campbell J."/>
            <person name="Dunn A."/>
            <person name="Faini M."/>
            <person name="Gunsalus R."/>
            <person name="Lostroh P."/>
            <person name="Lupp C."/>
            <person name="McCann J."/>
            <person name="Millikan D."/>
            <person name="Schaefer A."/>
            <person name="Stabb E."/>
            <person name="Stevens A."/>
            <person name="Visick K."/>
            <person name="Whistler C."/>
            <person name="Greenberg E.P."/>
        </authorList>
    </citation>
    <scope>NUCLEOTIDE SEQUENCE [LARGE SCALE GENOMIC DNA]</scope>
    <source>
        <strain>ATCC 700601 / ES114</strain>
    </source>
</reference>
<gene>
    <name type="ordered locus">VF_1660</name>
</gene>
<evidence type="ECO:0000255" key="1">
    <source>
        <dbReference type="HAMAP-Rule" id="MF_00676"/>
    </source>
</evidence>
<feature type="chain" id="PRO_1000044815" description="UPF0260 protein VF_1660">
    <location>
        <begin position="1"/>
        <end position="146"/>
    </location>
</feature>
<accession>Q5E491</accession>
<dbReference type="EMBL" id="CP000020">
    <property type="protein sequence ID" value="AAW86155.1"/>
    <property type="molecule type" value="Genomic_DNA"/>
</dbReference>
<dbReference type="RefSeq" id="WP_005419963.1">
    <property type="nucleotide sequence ID" value="NZ_CAWLES010000001.1"/>
</dbReference>
<dbReference type="RefSeq" id="YP_205043.1">
    <property type="nucleotide sequence ID" value="NC_006840.2"/>
</dbReference>
<dbReference type="STRING" id="312309.VF_1660"/>
<dbReference type="EnsemblBacteria" id="AAW86155">
    <property type="protein sequence ID" value="AAW86155"/>
    <property type="gene ID" value="VF_1660"/>
</dbReference>
<dbReference type="GeneID" id="54164354"/>
<dbReference type="KEGG" id="vfi:VF_1660"/>
<dbReference type="PATRIC" id="fig|312309.11.peg.1681"/>
<dbReference type="eggNOG" id="COG2983">
    <property type="taxonomic scope" value="Bacteria"/>
</dbReference>
<dbReference type="HOGENOM" id="CLU_109769_1_0_6"/>
<dbReference type="OrthoDB" id="9786855at2"/>
<dbReference type="Proteomes" id="UP000000537">
    <property type="component" value="Chromosome I"/>
</dbReference>
<dbReference type="HAMAP" id="MF_00676">
    <property type="entry name" value="UPF0260"/>
    <property type="match status" value="1"/>
</dbReference>
<dbReference type="InterPro" id="IPR005358">
    <property type="entry name" value="Puta_zinc/iron-chelating_dom"/>
</dbReference>
<dbReference type="InterPro" id="IPR008228">
    <property type="entry name" value="UCP006173"/>
</dbReference>
<dbReference type="NCBIfam" id="NF003501">
    <property type="entry name" value="PRK05170.1-5"/>
    <property type="match status" value="1"/>
</dbReference>
<dbReference type="NCBIfam" id="NF003503">
    <property type="entry name" value="PRK05170.2-1"/>
    <property type="match status" value="1"/>
</dbReference>
<dbReference type="NCBIfam" id="NF003507">
    <property type="entry name" value="PRK05170.2-5"/>
    <property type="match status" value="1"/>
</dbReference>
<dbReference type="PANTHER" id="PTHR37421">
    <property type="entry name" value="UPF0260 PROTEIN YCGN"/>
    <property type="match status" value="1"/>
</dbReference>
<dbReference type="PANTHER" id="PTHR37421:SF1">
    <property type="entry name" value="UPF0260 PROTEIN YCGN"/>
    <property type="match status" value="1"/>
</dbReference>
<dbReference type="Pfam" id="PF03692">
    <property type="entry name" value="CxxCxxCC"/>
    <property type="match status" value="1"/>
</dbReference>
<dbReference type="PIRSF" id="PIRSF006173">
    <property type="entry name" value="UCP006173"/>
    <property type="match status" value="1"/>
</dbReference>
<proteinExistence type="inferred from homology"/>
<name>Y1660_ALIF1</name>
<keyword id="KW-1185">Reference proteome</keyword>
<organism>
    <name type="scientific">Aliivibrio fischeri (strain ATCC 700601 / ES114)</name>
    <name type="common">Vibrio fischeri</name>
    <dbReference type="NCBI Taxonomy" id="312309"/>
    <lineage>
        <taxon>Bacteria</taxon>
        <taxon>Pseudomonadati</taxon>
        <taxon>Pseudomonadota</taxon>
        <taxon>Gammaproteobacteria</taxon>
        <taxon>Vibrionales</taxon>
        <taxon>Vibrionaceae</taxon>
        <taxon>Aliivibrio</taxon>
    </lineage>
</organism>
<comment type="similarity">
    <text evidence="1">Belongs to the UPF0260 family.</text>
</comment>